<gene>
    <name type="primary">sumo3l</name>
    <name type="synonym">sumo3</name>
    <name type="synonym">sumo3a</name>
    <name type="ORF">zgc:65847</name>
    <name type="ORF">zgc:85643</name>
</gene>
<evidence type="ECO:0000250" key="1"/>
<evidence type="ECO:0000255" key="2">
    <source>
        <dbReference type="PROSITE-ProRule" id="PRU00214"/>
    </source>
</evidence>
<evidence type="ECO:0000305" key="3"/>
<feature type="chain" id="PRO_0000267630" description="Small ubiquitin-related modifier 3-like">
    <location>
        <begin position="1"/>
        <end position="92"/>
    </location>
</feature>
<feature type="propeptide" id="PRO_0000267631" evidence="1">
    <location>
        <begin position="93"/>
        <end position="94"/>
    </location>
</feature>
<feature type="domain" description="Ubiquitin-like" evidence="2">
    <location>
        <begin position="15"/>
        <end position="92"/>
    </location>
</feature>
<feature type="cross-link" description="Glycyl lysine isopeptide (Lys-Gly) (interchain with G-Cter in SUMO)" evidence="1">
    <location>
        <position position="11"/>
    </location>
</feature>
<feature type="cross-link" description="Glycyl lysine isopeptide (Gly-Lys) (interchain with K-? in acceptor proteins)" evidence="2">
    <location>
        <position position="92"/>
    </location>
</feature>
<accession>Q6NV25</accession>
<sequence>MSEDKPKEGVKTENDHINLKVAGQDGSVVQFKIKRHTPLSKLMKAYCERQGLSIRQIRFRFDGQPINETDTPAQLEMEDEDTIDVFQQQTGGSC</sequence>
<reference key="1">
    <citation type="submission" date="2004-04" db="EMBL/GenBank/DDBJ databases">
        <authorList>
            <consortium name="NIH - Zebrafish Gene Collection (ZGC) project"/>
        </authorList>
    </citation>
    <scope>NUCLEOTIDE SEQUENCE [LARGE SCALE MRNA]</scope>
    <source>
        <tissue>Kidney</tissue>
    </source>
</reference>
<name>SMO3L_DANRE</name>
<protein>
    <recommendedName>
        <fullName>Small ubiquitin-related modifier 3-like</fullName>
    </recommendedName>
    <alternativeName>
        <fullName>SUMO-3-A</fullName>
    </alternativeName>
</protein>
<dbReference type="EMBL" id="BC068341">
    <property type="protein sequence ID" value="AAH68341.1"/>
    <property type="molecule type" value="mRNA"/>
</dbReference>
<dbReference type="EMBL" id="BC058303">
    <property type="protein sequence ID" value="AAH58303.1"/>
    <property type="molecule type" value="mRNA"/>
</dbReference>
<dbReference type="RefSeq" id="NP_998289.1">
    <property type="nucleotide sequence ID" value="NM_213124.2"/>
</dbReference>
<dbReference type="SMR" id="Q6NV25"/>
<dbReference type="FunCoup" id="Q6NV25">
    <property type="interactions" value="2408"/>
</dbReference>
<dbReference type="STRING" id="7955.ENSDARP00000035513"/>
<dbReference type="PaxDb" id="7955-ENSDARP00000035513"/>
<dbReference type="Ensembl" id="ENSDART00000035905">
    <property type="protein sequence ID" value="ENSDARP00000035513"/>
    <property type="gene ID" value="ENSDARG00000028119"/>
</dbReference>
<dbReference type="GeneID" id="406398"/>
<dbReference type="KEGG" id="dre:406398"/>
<dbReference type="AGR" id="ZFIN:ZDB-GENE-040426-2133"/>
<dbReference type="CTD" id="406398"/>
<dbReference type="ZFIN" id="ZDB-GENE-040426-2133">
    <property type="gene designation" value="sumo3a"/>
</dbReference>
<dbReference type="eggNOG" id="KOG1769">
    <property type="taxonomic scope" value="Eukaryota"/>
</dbReference>
<dbReference type="HOGENOM" id="CLU_148322_2_1_1"/>
<dbReference type="InParanoid" id="Q6NV25"/>
<dbReference type="OMA" id="CHRPCIC"/>
<dbReference type="OrthoDB" id="442921at2759"/>
<dbReference type="PhylomeDB" id="Q6NV25"/>
<dbReference type="TreeFam" id="TF315116"/>
<dbReference type="PRO" id="PR:Q6NV25"/>
<dbReference type="Proteomes" id="UP000000437">
    <property type="component" value="Chromosome 6"/>
</dbReference>
<dbReference type="Bgee" id="ENSDARG00000028119">
    <property type="expression patterns" value="Expressed in mature ovarian follicle and 33 other cell types or tissues"/>
</dbReference>
<dbReference type="GO" id="GO:0005737">
    <property type="term" value="C:cytoplasm"/>
    <property type="evidence" value="ECO:0007669"/>
    <property type="project" value="UniProtKB-SubCell"/>
</dbReference>
<dbReference type="GO" id="GO:0005634">
    <property type="term" value="C:nucleus"/>
    <property type="evidence" value="ECO:0000318"/>
    <property type="project" value="GO_Central"/>
</dbReference>
<dbReference type="GO" id="GO:0016605">
    <property type="term" value="C:PML body"/>
    <property type="evidence" value="ECO:0007669"/>
    <property type="project" value="UniProtKB-SubCell"/>
</dbReference>
<dbReference type="GO" id="GO:0031386">
    <property type="term" value="F:protein tag activity"/>
    <property type="evidence" value="ECO:0000318"/>
    <property type="project" value="GO_Central"/>
</dbReference>
<dbReference type="GO" id="GO:0044389">
    <property type="term" value="F:ubiquitin-like protein ligase binding"/>
    <property type="evidence" value="ECO:0000318"/>
    <property type="project" value="GO_Central"/>
</dbReference>
<dbReference type="GO" id="GO:0043009">
    <property type="term" value="P:chordate embryonic development"/>
    <property type="evidence" value="ECO:0000316"/>
    <property type="project" value="ZFIN"/>
</dbReference>
<dbReference type="GO" id="GO:0060216">
    <property type="term" value="P:definitive hemopoiesis"/>
    <property type="evidence" value="ECO:0000316"/>
    <property type="project" value="ZFIN"/>
</dbReference>
<dbReference type="GO" id="GO:0016925">
    <property type="term" value="P:protein sumoylation"/>
    <property type="evidence" value="ECO:0000318"/>
    <property type="project" value="GO_Central"/>
</dbReference>
<dbReference type="CDD" id="cd16115">
    <property type="entry name" value="Ubl_SUMO2_3_4"/>
    <property type="match status" value="1"/>
</dbReference>
<dbReference type="FunFam" id="3.10.20.90:FF:000022">
    <property type="entry name" value="Small ubiquitin-related modifier"/>
    <property type="match status" value="1"/>
</dbReference>
<dbReference type="Gene3D" id="3.10.20.90">
    <property type="entry name" value="Phosphatidylinositol 3-kinase Catalytic Subunit, Chain A, domain 1"/>
    <property type="match status" value="1"/>
</dbReference>
<dbReference type="InterPro" id="IPR022617">
    <property type="entry name" value="Rad60/SUMO-like_dom"/>
</dbReference>
<dbReference type="InterPro" id="IPR000626">
    <property type="entry name" value="Ubiquitin-like_dom"/>
</dbReference>
<dbReference type="InterPro" id="IPR029071">
    <property type="entry name" value="Ubiquitin-like_domsf"/>
</dbReference>
<dbReference type="PANTHER" id="PTHR10562">
    <property type="entry name" value="SMALL UBIQUITIN-RELATED MODIFIER"/>
    <property type="match status" value="1"/>
</dbReference>
<dbReference type="Pfam" id="PF11976">
    <property type="entry name" value="Rad60-SLD"/>
    <property type="match status" value="1"/>
</dbReference>
<dbReference type="SMART" id="SM00213">
    <property type="entry name" value="UBQ"/>
    <property type="match status" value="1"/>
</dbReference>
<dbReference type="SUPFAM" id="SSF54236">
    <property type="entry name" value="Ubiquitin-like"/>
    <property type="match status" value="1"/>
</dbReference>
<dbReference type="PROSITE" id="PS50053">
    <property type="entry name" value="UBIQUITIN_2"/>
    <property type="match status" value="1"/>
</dbReference>
<proteinExistence type="inferred from homology"/>
<keyword id="KW-0963">Cytoplasm</keyword>
<keyword id="KW-1017">Isopeptide bond</keyword>
<keyword id="KW-0539">Nucleus</keyword>
<keyword id="KW-1185">Reference proteome</keyword>
<keyword id="KW-0832">Ubl conjugation</keyword>
<keyword id="KW-0833">Ubl conjugation pathway</keyword>
<comment type="function">
    <text evidence="1">Ubiquitin-like protein which can be covalently attached to target lysines either as a monomer or as a lysine-linked polymer. Does not seem to be involved in protein degradation and may function as an antagonist of ubiquitin in the degradation process. Plays a role in a number of cellular processes such as nuclear transport, DNA replication and repair, mitosis and signal transduction. Covalent attachment to its substrates requires prior activation by the E1 complex sae1-sae2 and linkage to the E2 enzyme ube2i (By similarity).</text>
</comment>
<comment type="subunit">
    <text evidence="1">Interacts with sae2 and ube2i. Covalently attached to a number of proteins (By similarity).</text>
</comment>
<comment type="subcellular location">
    <subcellularLocation>
        <location evidence="1">Cytoplasm</location>
    </subcellularLocation>
    <subcellularLocation>
        <location evidence="1">Nucleus</location>
        <location evidence="1">PML body</location>
    </subcellularLocation>
</comment>
<comment type="PTM">
    <text evidence="1">Polymeric chains can be formed through Lys-11 cross-linking.</text>
</comment>
<comment type="PTM">
    <text evidence="1">Cleavage of precursor form by a sentrin-specific protease is necessary for function.</text>
</comment>
<comment type="similarity">
    <text evidence="3">Belongs to the ubiquitin family. SUMO subfamily.</text>
</comment>
<organism>
    <name type="scientific">Danio rerio</name>
    <name type="common">Zebrafish</name>
    <name type="synonym">Brachydanio rerio</name>
    <dbReference type="NCBI Taxonomy" id="7955"/>
    <lineage>
        <taxon>Eukaryota</taxon>
        <taxon>Metazoa</taxon>
        <taxon>Chordata</taxon>
        <taxon>Craniata</taxon>
        <taxon>Vertebrata</taxon>
        <taxon>Euteleostomi</taxon>
        <taxon>Actinopterygii</taxon>
        <taxon>Neopterygii</taxon>
        <taxon>Teleostei</taxon>
        <taxon>Ostariophysi</taxon>
        <taxon>Cypriniformes</taxon>
        <taxon>Danionidae</taxon>
        <taxon>Danioninae</taxon>
        <taxon>Danio</taxon>
    </lineage>
</organism>